<keyword id="KW-0574">Periplasm</keyword>
<keyword id="KW-1185">Reference proteome</keyword>
<keyword id="KW-0732">Signal</keyword>
<keyword id="KW-0813">Transport</keyword>
<protein>
    <recommendedName>
        <fullName>Probable deoxycholate-binding periplasmic protein YgiS</fullName>
    </recommendedName>
</protein>
<comment type="function">
    <text evidence="2">Probably part of a deoxycholate transport system. Its expression in the presence of deoxycholate in a ygiS deletion mutant increases intracellular deoxycholate levels and decreases cell growth; higher expression in the presence of deoxycholate inhibits cell growth completely. Bile acid detergents such as deoxycholate are important for host defense against bacterial growth in the gall bladder and duodenum.</text>
</comment>
<comment type="subcellular location">
    <subcellularLocation>
        <location evidence="4">Periplasm</location>
    </subcellularLocation>
</comment>
<comment type="induction">
    <text evidence="2">Repressed by the toxin-antitoxin system MqsR-MqsA; this mRNA is degraded by mRNA interferase MqsR.</text>
</comment>
<comment type="disruption phenotype">
    <text evidence="2">Cells grow better in the presence of the bile acid deoxycholate. Increased membrane stability when incubated for 2 hours in the presence of 4.5% deoxycholate. Increased cell survival in the presence of 20% deoxycholate.</text>
</comment>
<comment type="similarity">
    <text evidence="3">Belongs to the bacterial solute-binding protein 5 family.</text>
</comment>
<feature type="signal peptide" evidence="1">
    <location>
        <begin position="1"/>
        <end position="20"/>
    </location>
</feature>
<feature type="chain" id="PRO_0000031806" description="Probable deoxycholate-binding periplasmic protein YgiS">
    <location>
        <begin position="21"/>
        <end position="535"/>
    </location>
</feature>
<evidence type="ECO:0000255" key="1"/>
<evidence type="ECO:0000269" key="2">
    <source>
    </source>
</evidence>
<evidence type="ECO:0000305" key="3"/>
<evidence type="ECO:0000305" key="4">
    <source>
    </source>
</evidence>
<proteinExistence type="evidence at protein level"/>
<dbReference type="EMBL" id="U28377">
    <property type="protein sequence ID" value="AAA69188.1"/>
    <property type="molecule type" value="Genomic_DNA"/>
</dbReference>
<dbReference type="EMBL" id="U00096">
    <property type="protein sequence ID" value="AAC76056.1"/>
    <property type="molecule type" value="Genomic_DNA"/>
</dbReference>
<dbReference type="EMBL" id="AP009048">
    <property type="protein sequence ID" value="BAE77076.1"/>
    <property type="molecule type" value="Genomic_DNA"/>
</dbReference>
<dbReference type="PIR" id="B65089">
    <property type="entry name" value="B65089"/>
</dbReference>
<dbReference type="RefSeq" id="NP_417492.1">
    <property type="nucleotide sequence ID" value="NC_000913.3"/>
</dbReference>
<dbReference type="RefSeq" id="WP_001295629.1">
    <property type="nucleotide sequence ID" value="NZ_SSZK01000023.1"/>
</dbReference>
<dbReference type="SMR" id="Q46863"/>
<dbReference type="BioGRID" id="4259246">
    <property type="interactions" value="6"/>
</dbReference>
<dbReference type="FunCoup" id="Q46863">
    <property type="interactions" value="159"/>
</dbReference>
<dbReference type="STRING" id="511145.b3020"/>
<dbReference type="TCDB" id="3.A.1.5.41">
    <property type="family name" value="the atp-binding cassette (abc) superfamily"/>
</dbReference>
<dbReference type="jPOST" id="Q46863"/>
<dbReference type="PaxDb" id="511145-b3020"/>
<dbReference type="EnsemblBacteria" id="AAC76056">
    <property type="protein sequence ID" value="AAC76056"/>
    <property type="gene ID" value="b3020"/>
</dbReference>
<dbReference type="GeneID" id="947140"/>
<dbReference type="KEGG" id="ecj:JW2988"/>
<dbReference type="KEGG" id="eco:b3020"/>
<dbReference type="KEGG" id="ecoc:C3026_16500"/>
<dbReference type="PATRIC" id="fig|1411691.4.peg.3710"/>
<dbReference type="EchoBASE" id="EB2839"/>
<dbReference type="eggNOG" id="COG4166">
    <property type="taxonomic scope" value="Bacteria"/>
</dbReference>
<dbReference type="HOGENOM" id="CLU_017028_0_3_6"/>
<dbReference type="InParanoid" id="Q46863"/>
<dbReference type="OMA" id="TMLDTMH"/>
<dbReference type="OrthoDB" id="9801912at2"/>
<dbReference type="PhylomeDB" id="Q46863"/>
<dbReference type="BioCyc" id="EcoCyc:YGIS-MONOMER"/>
<dbReference type="PRO" id="PR:Q46863"/>
<dbReference type="Proteomes" id="UP000000625">
    <property type="component" value="Chromosome"/>
</dbReference>
<dbReference type="GO" id="GO:0043190">
    <property type="term" value="C:ATP-binding cassette (ABC) transporter complex"/>
    <property type="evidence" value="ECO:0007669"/>
    <property type="project" value="InterPro"/>
</dbReference>
<dbReference type="GO" id="GO:0030288">
    <property type="term" value="C:outer membrane-bounded periplasmic space"/>
    <property type="evidence" value="ECO:0000314"/>
    <property type="project" value="EcoCyc"/>
</dbReference>
<dbReference type="GO" id="GO:1904680">
    <property type="term" value="F:peptide transmembrane transporter activity"/>
    <property type="evidence" value="ECO:0000318"/>
    <property type="project" value="GO_Central"/>
</dbReference>
<dbReference type="GO" id="GO:0015721">
    <property type="term" value="P:bile acid and bile salt transport"/>
    <property type="evidence" value="ECO:0000314"/>
    <property type="project" value="EcoCyc"/>
</dbReference>
<dbReference type="GO" id="GO:0015833">
    <property type="term" value="P:peptide transport"/>
    <property type="evidence" value="ECO:0000318"/>
    <property type="project" value="GO_Central"/>
</dbReference>
<dbReference type="CDD" id="cd08504">
    <property type="entry name" value="PBP2_OppA"/>
    <property type="match status" value="1"/>
</dbReference>
<dbReference type="FunFam" id="3.90.76.10:FF:000001">
    <property type="entry name" value="Oligopeptide ABC transporter substrate-binding protein"/>
    <property type="match status" value="1"/>
</dbReference>
<dbReference type="FunFam" id="3.10.105.10:FF:000001">
    <property type="entry name" value="Oligopeptide ABC transporter, oligopeptide-binding protein"/>
    <property type="match status" value="1"/>
</dbReference>
<dbReference type="Gene3D" id="3.90.76.10">
    <property type="entry name" value="Dipeptide-binding Protein, Domain 1"/>
    <property type="match status" value="1"/>
</dbReference>
<dbReference type="Gene3D" id="3.10.105.10">
    <property type="entry name" value="Dipeptide-binding Protein, Domain 3"/>
    <property type="match status" value="1"/>
</dbReference>
<dbReference type="Gene3D" id="3.40.190.10">
    <property type="entry name" value="Periplasmic binding protein-like II"/>
    <property type="match status" value="1"/>
</dbReference>
<dbReference type="InterPro" id="IPR030678">
    <property type="entry name" value="Peptide/Ni-bd"/>
</dbReference>
<dbReference type="InterPro" id="IPR039424">
    <property type="entry name" value="SBP_5"/>
</dbReference>
<dbReference type="InterPro" id="IPR000914">
    <property type="entry name" value="SBP_5_dom"/>
</dbReference>
<dbReference type="NCBIfam" id="NF007287">
    <property type="entry name" value="PRK09755.1"/>
    <property type="match status" value="1"/>
</dbReference>
<dbReference type="PANTHER" id="PTHR30290">
    <property type="entry name" value="PERIPLASMIC BINDING COMPONENT OF ABC TRANSPORTER"/>
    <property type="match status" value="1"/>
</dbReference>
<dbReference type="PANTHER" id="PTHR30290:SF10">
    <property type="entry name" value="PERIPLASMIC OLIGOPEPTIDE-BINDING PROTEIN-RELATED"/>
    <property type="match status" value="1"/>
</dbReference>
<dbReference type="Pfam" id="PF00496">
    <property type="entry name" value="SBP_bac_5"/>
    <property type="match status" value="1"/>
</dbReference>
<dbReference type="PIRSF" id="PIRSF002741">
    <property type="entry name" value="MppA"/>
    <property type="match status" value="1"/>
</dbReference>
<dbReference type="SUPFAM" id="SSF53850">
    <property type="entry name" value="Periplasmic binding protein-like II"/>
    <property type="match status" value="1"/>
</dbReference>
<organism>
    <name type="scientific">Escherichia coli (strain K12)</name>
    <dbReference type="NCBI Taxonomy" id="83333"/>
    <lineage>
        <taxon>Bacteria</taxon>
        <taxon>Pseudomonadati</taxon>
        <taxon>Pseudomonadota</taxon>
        <taxon>Gammaproteobacteria</taxon>
        <taxon>Enterobacterales</taxon>
        <taxon>Enterobacteriaceae</taxon>
        <taxon>Escherichia</taxon>
    </lineage>
</organism>
<gene>
    <name type="primary">ygiS</name>
    <name type="ordered locus">b3020</name>
    <name type="ordered locus">JW2988</name>
</gene>
<reference key="1">
    <citation type="journal article" date="1997" name="Science">
        <title>The complete genome sequence of Escherichia coli K-12.</title>
        <authorList>
            <person name="Blattner F.R."/>
            <person name="Plunkett G. III"/>
            <person name="Bloch C.A."/>
            <person name="Perna N.T."/>
            <person name="Burland V."/>
            <person name="Riley M."/>
            <person name="Collado-Vides J."/>
            <person name="Glasner J.D."/>
            <person name="Rode C.K."/>
            <person name="Mayhew G.F."/>
            <person name="Gregor J."/>
            <person name="Davis N.W."/>
            <person name="Kirkpatrick H.A."/>
            <person name="Goeden M.A."/>
            <person name="Rose D.J."/>
            <person name="Mau B."/>
            <person name="Shao Y."/>
        </authorList>
    </citation>
    <scope>NUCLEOTIDE SEQUENCE [LARGE SCALE GENOMIC DNA]</scope>
    <source>
        <strain>K12 / MG1655 / ATCC 47076</strain>
    </source>
</reference>
<reference key="2">
    <citation type="journal article" date="2006" name="Mol. Syst. Biol.">
        <title>Highly accurate genome sequences of Escherichia coli K-12 strains MG1655 and W3110.</title>
        <authorList>
            <person name="Hayashi K."/>
            <person name="Morooka N."/>
            <person name="Yamamoto Y."/>
            <person name="Fujita K."/>
            <person name="Isono K."/>
            <person name="Choi S."/>
            <person name="Ohtsubo E."/>
            <person name="Baba T."/>
            <person name="Wanner B.L."/>
            <person name="Mori H."/>
            <person name="Horiuchi T."/>
        </authorList>
    </citation>
    <scope>NUCLEOTIDE SEQUENCE [LARGE SCALE GENOMIC DNA]</scope>
    <source>
        <strain>K12 / W3110 / ATCC 27325 / DSM 5911</strain>
    </source>
</reference>
<reference key="3">
    <citation type="journal article" date="1999" name="Electrophoresis">
        <title>Enrichment of low abundance proteins of Escherichia coli by hydroxyapatite chromatography.</title>
        <authorList>
            <person name="Fountoulakis M."/>
            <person name="Takacs M.-F."/>
            <person name="Berndt P."/>
            <person name="Langen H."/>
            <person name="Takacs B."/>
        </authorList>
    </citation>
    <scope>IDENTIFICATION BY MASS SPECTROMETRY</scope>
    <source>
        <strain>B / BL21</strain>
    </source>
</reference>
<reference key="4">
    <citation type="journal article" date="2015" name="Environ. Microbiol.">
        <title>The MqsR/MqsA toxin/antitoxin system protects Escherichia coli during bile acid stress.</title>
        <authorList>
            <person name="Kwan B.W."/>
            <person name="Lord D.M."/>
            <person name="Peti W."/>
            <person name="Page R."/>
            <person name="Benedik M.J."/>
            <person name="Wood T.K."/>
        </authorList>
    </citation>
    <scope>FUNCTION</scope>
    <scope>SUBCELLULAR LOCATION</scope>
    <scope>INDUCTION</scope>
    <scope>DISRUPTION PHENOTYPE</scope>
    <source>
        <strain>K12 / BW25113</strain>
    </source>
</reference>
<accession>Q46863</accession>
<accession>Q2M9I0</accession>
<name>YGIS_ECOLI</name>
<sequence length="535" mass="60694">MYTRNLLWLVSLVSAAPLYAADVPANTPLAPQQVFRYNNHSDPGTLDPQKVEENTAAQIVLDLFEGLVWMDGEGQVQPAQAERWEILDGGKRYIFHLRSGLQWSDGQPLTAEDFVLGWQRAVDPKTASPFAGYLAQAHINNAAAIVAGKADVTSLGVKATDDRTLEVTLEQPVPWFTTMLAWPTLFPVPHHVIAKHGDSWSKPENMVYNGAFVLDQWVVNEKITARKNPKYRDAQHTVLQQVEYLALDNSVTGYNRYRAGEVDLTWVPAQQIPAIEKSLPGELRIIPRLNSEYYNFNLEKPPFNDVRVRRALYLTVDRQLIAQKVLGLRTPATTLTPPEVKGFSATTFDELQKPMSERVAMAKALLKQAGYDASHPLRFELFYNKYDLHEKTAIALSSEWKKWLGAQVTLRTMEWKTYLDARRAGDFMLSRQSWDATYNDASSFLNTLKSDSEENVGHWKNAQYDALLNQATQITDATKRNALYQQAEVIINQQAPLIPIYYQPLIKLLKPYVGGFPLHNPQDYVYSKELYIKAH</sequence>